<organism>
    <name type="scientific">Arabidopsis thaliana</name>
    <name type="common">Mouse-ear cress</name>
    <dbReference type="NCBI Taxonomy" id="3702"/>
    <lineage>
        <taxon>Eukaryota</taxon>
        <taxon>Viridiplantae</taxon>
        <taxon>Streptophyta</taxon>
        <taxon>Embryophyta</taxon>
        <taxon>Tracheophyta</taxon>
        <taxon>Spermatophyta</taxon>
        <taxon>Magnoliopsida</taxon>
        <taxon>eudicotyledons</taxon>
        <taxon>Gunneridae</taxon>
        <taxon>Pentapetalae</taxon>
        <taxon>rosids</taxon>
        <taxon>malvids</taxon>
        <taxon>Brassicales</taxon>
        <taxon>Brassicaceae</taxon>
        <taxon>Camelineae</taxon>
        <taxon>Arabidopsis</taxon>
    </lineage>
</organism>
<feature type="chain" id="PRO_0000375238" description="F-box protein SKIP16">
    <location>
        <begin position="1"/>
        <end position="436"/>
    </location>
</feature>
<feature type="domain" description="F-box; degenerate">
    <location>
        <begin position="75"/>
        <end position="111"/>
    </location>
</feature>
<feature type="domain" description="ApaG" evidence="2">
    <location>
        <begin position="295"/>
        <end position="436"/>
    </location>
</feature>
<comment type="function">
    <text evidence="1">Component of SCF(ASK-cullin-F-box) E3 ubiquitin ligase complexes, which may mediate the ubiquitination and subsequent proteasomal degradation of target proteins.</text>
</comment>
<comment type="pathway">
    <text>Protein modification; protein ubiquitination.</text>
</comment>
<comment type="subunit">
    <text evidence="1 3 4">Part of a SCF (ASK-cullin-F-box) protein ligase complex (By similarity). Interacts with SKP1A/ASK1, SKP1B/ASK2, ASK4, ASK11 and ASK13.</text>
</comment>
<comment type="interaction">
    <interactant intactId="EBI-591078">
        <id>Q9LND7</id>
    </interactant>
    <interactant intactId="EBI-604076">
        <id>Q9FHW7</id>
        <label>SKP1B</label>
    </interactant>
    <organismsDiffer>false</organismsDiffer>
    <experiments>3</experiments>
</comment>
<comment type="domain">
    <text evidence="1">The F-box is necessary for the interaction with ASK proteins.</text>
</comment>
<evidence type="ECO:0000250" key="1"/>
<evidence type="ECO:0000255" key="2">
    <source>
        <dbReference type="PROSITE-ProRule" id="PRU00412"/>
    </source>
</evidence>
<evidence type="ECO:0000269" key="3">
    <source>
    </source>
</evidence>
<evidence type="ECO:0000269" key="4">
    <source>
    </source>
</evidence>
<accession>Q9LND7</accession>
<proteinExistence type="evidence at protein level"/>
<sequence>MGLEDAGDLVLHIVLSKIGPENTARVACVSKRLKVSASEESLWSIFCSNDLNISTPLDPHGDPAPSFKRAYQLWRESFRMYPWNLVKRVRLCWDNLKQWLTLNFPEAKATLRKGVTEDDLQEFETSLKVKLPLPTRLLYRFVDGQELSSPNGLDGSLGLIGGYSAYSHDVNVYLLPLKEVMRETKESFMRDLGFSSRLDLIVMAASVVASLKIFLLDCTTGQLFTGTSNRQLLPCVPDALVRSVHDTNGDQQQDAMLLWLEEHGRRLQTGTINVRQQNNVKSISLFPEIPPLCSVSVTNGVQVRASSVFIPEISNLRDQPPAYWYAYSIRMSLMPEGCILNGTHHSSCQLYWRHWVIRADNEVIDNVNGEAVIGKYPLLQAGEEEFVYESCSSFPTTAGSIDGSFTFVPGSLRDPKGSQFEVKVVEFPLELPDYIF</sequence>
<protein>
    <recommendedName>
        <fullName>F-box protein SKIP16</fullName>
    </recommendedName>
    <alternativeName>
        <fullName>SKP1-interacting partner 16</fullName>
    </alternativeName>
</protein>
<keyword id="KW-1185">Reference proteome</keyword>
<keyword id="KW-0833">Ubl conjugation pathway</keyword>
<reference key="1">
    <citation type="journal article" date="2000" name="Nature">
        <title>Sequence and analysis of chromosome 1 of the plant Arabidopsis thaliana.</title>
        <authorList>
            <person name="Theologis A."/>
            <person name="Ecker J.R."/>
            <person name="Palm C.J."/>
            <person name="Federspiel N.A."/>
            <person name="Kaul S."/>
            <person name="White O."/>
            <person name="Alonso J."/>
            <person name="Altafi H."/>
            <person name="Araujo R."/>
            <person name="Bowman C.L."/>
            <person name="Brooks S.Y."/>
            <person name="Buehler E."/>
            <person name="Chan A."/>
            <person name="Chao Q."/>
            <person name="Chen H."/>
            <person name="Cheuk R.F."/>
            <person name="Chin C.W."/>
            <person name="Chung M.K."/>
            <person name="Conn L."/>
            <person name="Conway A.B."/>
            <person name="Conway A.R."/>
            <person name="Creasy T.H."/>
            <person name="Dewar K."/>
            <person name="Dunn P."/>
            <person name="Etgu P."/>
            <person name="Feldblyum T.V."/>
            <person name="Feng J.-D."/>
            <person name="Fong B."/>
            <person name="Fujii C.Y."/>
            <person name="Gill J.E."/>
            <person name="Goldsmith A.D."/>
            <person name="Haas B."/>
            <person name="Hansen N.F."/>
            <person name="Hughes B."/>
            <person name="Huizar L."/>
            <person name="Hunter J.L."/>
            <person name="Jenkins J."/>
            <person name="Johnson-Hopson C."/>
            <person name="Khan S."/>
            <person name="Khaykin E."/>
            <person name="Kim C.J."/>
            <person name="Koo H.L."/>
            <person name="Kremenetskaia I."/>
            <person name="Kurtz D.B."/>
            <person name="Kwan A."/>
            <person name="Lam B."/>
            <person name="Langin-Hooper S."/>
            <person name="Lee A."/>
            <person name="Lee J.M."/>
            <person name="Lenz C.A."/>
            <person name="Li J.H."/>
            <person name="Li Y.-P."/>
            <person name="Lin X."/>
            <person name="Liu S.X."/>
            <person name="Liu Z.A."/>
            <person name="Luros J.S."/>
            <person name="Maiti R."/>
            <person name="Marziali A."/>
            <person name="Militscher J."/>
            <person name="Miranda M."/>
            <person name="Nguyen M."/>
            <person name="Nierman W.C."/>
            <person name="Osborne B.I."/>
            <person name="Pai G."/>
            <person name="Peterson J."/>
            <person name="Pham P.K."/>
            <person name="Rizzo M."/>
            <person name="Rooney T."/>
            <person name="Rowley D."/>
            <person name="Sakano H."/>
            <person name="Salzberg S.L."/>
            <person name="Schwartz J.R."/>
            <person name="Shinn P."/>
            <person name="Southwick A.M."/>
            <person name="Sun H."/>
            <person name="Tallon L.J."/>
            <person name="Tambunga G."/>
            <person name="Toriumi M.J."/>
            <person name="Town C.D."/>
            <person name="Utterback T."/>
            <person name="Van Aken S."/>
            <person name="Vaysberg M."/>
            <person name="Vysotskaia V.S."/>
            <person name="Walker M."/>
            <person name="Wu D."/>
            <person name="Yu G."/>
            <person name="Fraser C.M."/>
            <person name="Venter J.C."/>
            <person name="Davis R.W."/>
        </authorList>
    </citation>
    <scope>NUCLEOTIDE SEQUENCE [LARGE SCALE GENOMIC DNA]</scope>
    <source>
        <strain>cv. Columbia</strain>
    </source>
</reference>
<reference key="2">
    <citation type="journal article" date="2017" name="Plant J.">
        <title>Araport11: a complete reannotation of the Arabidopsis thaliana reference genome.</title>
        <authorList>
            <person name="Cheng C.Y."/>
            <person name="Krishnakumar V."/>
            <person name="Chan A.P."/>
            <person name="Thibaud-Nissen F."/>
            <person name="Schobel S."/>
            <person name="Town C.D."/>
        </authorList>
    </citation>
    <scope>GENOME REANNOTATION</scope>
    <source>
        <strain>cv. Columbia</strain>
    </source>
</reference>
<reference key="3">
    <citation type="journal article" date="2003" name="Science">
        <title>Empirical analysis of transcriptional activity in the Arabidopsis genome.</title>
        <authorList>
            <person name="Yamada K."/>
            <person name="Lim J."/>
            <person name="Dale J.M."/>
            <person name="Chen H."/>
            <person name="Shinn P."/>
            <person name="Palm C.J."/>
            <person name="Southwick A.M."/>
            <person name="Wu H.C."/>
            <person name="Kim C.J."/>
            <person name="Nguyen M."/>
            <person name="Pham P.K."/>
            <person name="Cheuk R.F."/>
            <person name="Karlin-Newmann G."/>
            <person name="Liu S.X."/>
            <person name="Lam B."/>
            <person name="Sakano H."/>
            <person name="Wu T."/>
            <person name="Yu G."/>
            <person name="Miranda M."/>
            <person name="Quach H.L."/>
            <person name="Tripp M."/>
            <person name="Chang C.H."/>
            <person name="Lee J.M."/>
            <person name="Toriumi M.J."/>
            <person name="Chan M.M."/>
            <person name="Tang C.C."/>
            <person name="Onodera C.S."/>
            <person name="Deng J.M."/>
            <person name="Akiyama K."/>
            <person name="Ansari Y."/>
            <person name="Arakawa T."/>
            <person name="Banh J."/>
            <person name="Banno F."/>
            <person name="Bowser L."/>
            <person name="Brooks S.Y."/>
            <person name="Carninci P."/>
            <person name="Chao Q."/>
            <person name="Choy N."/>
            <person name="Enju A."/>
            <person name="Goldsmith A.D."/>
            <person name="Gurjal M."/>
            <person name="Hansen N.F."/>
            <person name="Hayashizaki Y."/>
            <person name="Johnson-Hopson C."/>
            <person name="Hsuan V.W."/>
            <person name="Iida K."/>
            <person name="Karnes M."/>
            <person name="Khan S."/>
            <person name="Koesema E."/>
            <person name="Ishida J."/>
            <person name="Jiang P.X."/>
            <person name="Jones T."/>
            <person name="Kawai J."/>
            <person name="Kamiya A."/>
            <person name="Meyers C."/>
            <person name="Nakajima M."/>
            <person name="Narusaka M."/>
            <person name="Seki M."/>
            <person name="Sakurai T."/>
            <person name="Satou M."/>
            <person name="Tamse R."/>
            <person name="Vaysberg M."/>
            <person name="Wallender E.K."/>
            <person name="Wong C."/>
            <person name="Yamamura Y."/>
            <person name="Yuan S."/>
            <person name="Shinozaki K."/>
            <person name="Davis R.W."/>
            <person name="Theologis A."/>
            <person name="Ecker J.R."/>
        </authorList>
    </citation>
    <scope>NUCLEOTIDE SEQUENCE [LARGE SCALE MRNA]</scope>
    <source>
        <strain>cv. Columbia</strain>
    </source>
</reference>
<reference key="4">
    <citation type="journal article" date="2002" name="Proc. Natl. Acad. Sci. U.S.A.">
        <title>The F-box subunit of the SCF E3 complex is encoded by a diverse superfamily of genes in Arabidopsis.</title>
        <authorList>
            <person name="Gagne J.M."/>
            <person name="Downes B.P."/>
            <person name="Shiu S.-H."/>
            <person name="Durski A.M."/>
            <person name="Vierstra R.D."/>
        </authorList>
    </citation>
    <scope>INTERACTION WITH SKP1A/ASK1; SKP1B/ASK2; ASK4; ASK11 AND ASK13</scope>
</reference>
<reference key="5">
    <citation type="journal article" date="2003" name="Plant J.">
        <title>Protein interaction analysis of SCF ubiquitin E3 ligase subunits from Arabidopsis.</title>
        <authorList>
            <person name="Risseeuw E.P."/>
            <person name="Daskalchuk T.E."/>
            <person name="Banks T.W."/>
            <person name="Liu E."/>
            <person name="Cotelesage J."/>
            <person name="Hellmann H."/>
            <person name="Estelle M."/>
            <person name="Somers D.E."/>
            <person name="Crosby W.L."/>
        </authorList>
    </citation>
    <scope>INTERACTION WITH SKPIB/ASK2</scope>
</reference>
<dbReference type="EMBL" id="AC024174">
    <property type="protein sequence ID" value="AAF80134.1"/>
    <property type="molecule type" value="Genomic_DNA"/>
</dbReference>
<dbReference type="EMBL" id="CP002684">
    <property type="protein sequence ID" value="AEE27940.1"/>
    <property type="molecule type" value="Genomic_DNA"/>
</dbReference>
<dbReference type="EMBL" id="AF419599">
    <property type="protein sequence ID" value="AAL31931.1"/>
    <property type="molecule type" value="mRNA"/>
</dbReference>
<dbReference type="EMBL" id="AY099571">
    <property type="protein sequence ID" value="AAM20423.1"/>
    <property type="molecule type" value="mRNA"/>
</dbReference>
<dbReference type="EMBL" id="BT002142">
    <property type="protein sequence ID" value="AAN72153.1"/>
    <property type="molecule type" value="mRNA"/>
</dbReference>
<dbReference type="PIR" id="D86196">
    <property type="entry name" value="D86196"/>
</dbReference>
<dbReference type="RefSeq" id="NP_563759.1">
    <property type="nucleotide sequence ID" value="NM_100492.4"/>
</dbReference>
<dbReference type="SMR" id="Q9LND7"/>
<dbReference type="BioGRID" id="22362">
    <property type="interactions" value="3"/>
</dbReference>
<dbReference type="FunCoup" id="Q9LND7">
    <property type="interactions" value="2580"/>
</dbReference>
<dbReference type="IntAct" id="Q9LND7">
    <property type="interactions" value="7"/>
</dbReference>
<dbReference type="STRING" id="3702.Q9LND7"/>
<dbReference type="PaxDb" id="3702-AT1G06110.1"/>
<dbReference type="ProteomicsDB" id="234566"/>
<dbReference type="EnsemblPlants" id="AT1G06110.1">
    <property type="protein sequence ID" value="AT1G06110.1"/>
    <property type="gene ID" value="AT1G06110"/>
</dbReference>
<dbReference type="GeneID" id="837120"/>
<dbReference type="Gramene" id="AT1G06110.1">
    <property type="protein sequence ID" value="AT1G06110.1"/>
    <property type="gene ID" value="AT1G06110"/>
</dbReference>
<dbReference type="KEGG" id="ath:AT1G06110"/>
<dbReference type="Araport" id="AT1G06110"/>
<dbReference type="TAIR" id="AT1G06110">
    <property type="gene designation" value="SKIP16"/>
</dbReference>
<dbReference type="eggNOG" id="KOG4408">
    <property type="taxonomic scope" value="Eukaryota"/>
</dbReference>
<dbReference type="HOGENOM" id="CLU_050311_0_0_1"/>
<dbReference type="InParanoid" id="Q9LND7"/>
<dbReference type="OMA" id="YVHDKDC"/>
<dbReference type="PhylomeDB" id="Q9LND7"/>
<dbReference type="UniPathway" id="UPA00143"/>
<dbReference type="PRO" id="PR:Q9LND7"/>
<dbReference type="Proteomes" id="UP000006548">
    <property type="component" value="Chromosome 1"/>
</dbReference>
<dbReference type="ExpressionAtlas" id="Q9LND7">
    <property type="expression patterns" value="baseline and differential"/>
</dbReference>
<dbReference type="GO" id="GO:0019005">
    <property type="term" value="C:SCF ubiquitin ligase complex"/>
    <property type="evidence" value="ECO:0000353"/>
    <property type="project" value="TAIR"/>
</dbReference>
<dbReference type="GO" id="GO:0016567">
    <property type="term" value="P:protein ubiquitination"/>
    <property type="evidence" value="ECO:0007669"/>
    <property type="project" value="UniProtKB-UniPathway"/>
</dbReference>
<dbReference type="FunFam" id="2.60.40.1470:FF:000003">
    <property type="entry name" value="F-box protein SKIP16"/>
    <property type="match status" value="1"/>
</dbReference>
<dbReference type="Gene3D" id="2.60.40.1470">
    <property type="entry name" value="ApaG domain"/>
    <property type="match status" value="1"/>
</dbReference>
<dbReference type="InterPro" id="IPR007474">
    <property type="entry name" value="ApaG_domain"/>
</dbReference>
<dbReference type="InterPro" id="IPR036767">
    <property type="entry name" value="ApaG_sf"/>
</dbReference>
<dbReference type="InterPro" id="IPR036047">
    <property type="entry name" value="F-box-like_dom_sf"/>
</dbReference>
<dbReference type="InterPro" id="IPR037883">
    <property type="entry name" value="Knr4/Smi1-like_sf"/>
</dbReference>
<dbReference type="PANTHER" id="PTHR47463">
    <property type="entry name" value="F-BOX PROTEIN SKIP16"/>
    <property type="match status" value="1"/>
</dbReference>
<dbReference type="PANTHER" id="PTHR47463:SF2">
    <property type="entry name" value="F-BOX PROTEIN SKIP16"/>
    <property type="match status" value="1"/>
</dbReference>
<dbReference type="Pfam" id="PF04379">
    <property type="entry name" value="DUF525"/>
    <property type="match status" value="1"/>
</dbReference>
<dbReference type="SUPFAM" id="SSF110069">
    <property type="entry name" value="ApaG-like"/>
    <property type="match status" value="1"/>
</dbReference>
<dbReference type="SUPFAM" id="SSF81383">
    <property type="entry name" value="F-box domain"/>
    <property type="match status" value="1"/>
</dbReference>
<dbReference type="SUPFAM" id="SSF160631">
    <property type="entry name" value="SMI1/KNR4-like"/>
    <property type="match status" value="1"/>
</dbReference>
<dbReference type="PROSITE" id="PS51087">
    <property type="entry name" value="APAG"/>
    <property type="match status" value="1"/>
</dbReference>
<name>SKI16_ARATH</name>
<gene>
    <name type="primary">SKIP16</name>
    <name type="ordered locus">At1g06110</name>
    <name type="ORF">T21E18.16</name>
</gene>